<evidence type="ECO:0000250" key="1"/>
<evidence type="ECO:0000255" key="2">
    <source>
        <dbReference type="PROSITE-ProRule" id="PRU00108"/>
    </source>
</evidence>
<evidence type="ECO:0000256" key="3">
    <source>
        <dbReference type="SAM" id="MobiDB-lite"/>
    </source>
</evidence>
<evidence type="ECO:0000269" key="4">
    <source>
    </source>
</evidence>
<evidence type="ECO:0000269" key="5">
    <source>
    </source>
</evidence>
<evidence type="ECO:0000305" key="6"/>
<dbReference type="EMBL" id="M85271">
    <property type="protein sequence ID" value="AAA37826.1"/>
    <property type="molecule type" value="Genomic_DNA"/>
</dbReference>
<dbReference type="EMBL" id="Y13149">
    <property type="protein sequence ID" value="CAA73611.1"/>
    <property type="molecule type" value="mRNA"/>
</dbReference>
<dbReference type="EMBL" id="Y13150">
    <property type="protein sequence ID" value="CAA73612.1"/>
    <property type="molecule type" value="mRNA"/>
</dbReference>
<dbReference type="CCDS" id="CCDS26153.1"/>
<dbReference type="PIR" id="A42768">
    <property type="entry name" value="A42768"/>
</dbReference>
<dbReference type="RefSeq" id="NP_034481.1">
    <property type="nucleotide sequence ID" value="NM_010351.1"/>
</dbReference>
<dbReference type="SMR" id="Q02591"/>
<dbReference type="BioGRID" id="200082">
    <property type="interactions" value="5"/>
</dbReference>
<dbReference type="FunCoup" id="Q02591">
    <property type="interactions" value="808"/>
</dbReference>
<dbReference type="IntAct" id="Q02591">
    <property type="interactions" value="10"/>
</dbReference>
<dbReference type="MINT" id="Q02591"/>
<dbReference type="STRING" id="10090.ENSMUSP00000021513"/>
<dbReference type="GlyGen" id="Q02591">
    <property type="glycosylation" value="1 site"/>
</dbReference>
<dbReference type="iPTMnet" id="Q02591"/>
<dbReference type="PhosphoSitePlus" id="Q02591"/>
<dbReference type="PaxDb" id="10090-ENSMUSP00000021513"/>
<dbReference type="PeptideAtlas" id="Q02591"/>
<dbReference type="Antibodypedia" id="27137">
    <property type="antibodies" value="518 antibodies from 32 providers"/>
</dbReference>
<dbReference type="DNASU" id="14836"/>
<dbReference type="Ensembl" id="ENSMUST00000021513.6">
    <property type="protein sequence ID" value="ENSMUSP00000021513.4"/>
    <property type="gene ID" value="ENSMUSG00000021095.6"/>
</dbReference>
<dbReference type="GeneID" id="14836"/>
<dbReference type="KEGG" id="mmu:14836"/>
<dbReference type="UCSC" id="uc007oxh.1">
    <property type="organism name" value="mouse"/>
</dbReference>
<dbReference type="AGR" id="MGI:95841"/>
<dbReference type="CTD" id="145258"/>
<dbReference type="MGI" id="MGI:95841">
    <property type="gene designation" value="Gsc"/>
</dbReference>
<dbReference type="VEuPathDB" id="HostDB:ENSMUSG00000021095"/>
<dbReference type="eggNOG" id="KOG0490">
    <property type="taxonomic scope" value="Eukaryota"/>
</dbReference>
<dbReference type="GeneTree" id="ENSGT00940000160635"/>
<dbReference type="HOGENOM" id="CLU_096519_0_0_1"/>
<dbReference type="InParanoid" id="Q02591"/>
<dbReference type="OMA" id="QCSCVPA"/>
<dbReference type="OrthoDB" id="6159439at2759"/>
<dbReference type="PhylomeDB" id="Q02591"/>
<dbReference type="TreeFam" id="TF351613"/>
<dbReference type="BioGRID-ORCS" id="14836">
    <property type="hits" value="3 hits in 78 CRISPR screens"/>
</dbReference>
<dbReference type="PRO" id="PR:Q02591"/>
<dbReference type="Proteomes" id="UP000000589">
    <property type="component" value="Chromosome 12"/>
</dbReference>
<dbReference type="RNAct" id="Q02591">
    <property type="molecule type" value="protein"/>
</dbReference>
<dbReference type="Bgee" id="ENSMUSG00000021095">
    <property type="expression patterns" value="Expressed in mandible and 121 other cell types or tissues"/>
</dbReference>
<dbReference type="GO" id="GO:0005654">
    <property type="term" value="C:nucleoplasm"/>
    <property type="evidence" value="ECO:0000304"/>
    <property type="project" value="Reactome"/>
</dbReference>
<dbReference type="GO" id="GO:0005667">
    <property type="term" value="C:transcription regulator complex"/>
    <property type="evidence" value="ECO:0000314"/>
    <property type="project" value="MGI"/>
</dbReference>
<dbReference type="GO" id="GO:0001227">
    <property type="term" value="F:DNA-binding transcription repressor activity, RNA polymerase II-specific"/>
    <property type="evidence" value="ECO:0000314"/>
    <property type="project" value="NTNU_SB"/>
</dbReference>
<dbReference type="GO" id="GO:0000978">
    <property type="term" value="F:RNA polymerase II cis-regulatory region sequence-specific DNA binding"/>
    <property type="evidence" value="ECO:0000314"/>
    <property type="project" value="NTNU_SB"/>
</dbReference>
<dbReference type="GO" id="GO:0061629">
    <property type="term" value="F:RNA polymerase II-specific DNA-binding transcription factor binding"/>
    <property type="evidence" value="ECO:0000353"/>
    <property type="project" value="BHF-UCL"/>
</dbReference>
<dbReference type="GO" id="GO:0009653">
    <property type="term" value="P:anatomical structure morphogenesis"/>
    <property type="evidence" value="ECO:0000316"/>
    <property type="project" value="MGI"/>
</dbReference>
<dbReference type="GO" id="GO:0021904">
    <property type="term" value="P:dorsal/ventral neural tube patterning"/>
    <property type="evidence" value="ECO:0000316"/>
    <property type="project" value="MGI"/>
</dbReference>
<dbReference type="GO" id="GO:0043583">
    <property type="term" value="P:ear development"/>
    <property type="evidence" value="ECO:0000315"/>
    <property type="project" value="MGI"/>
</dbReference>
<dbReference type="GO" id="GO:0048704">
    <property type="term" value="P:embryonic skeletal system morphogenesis"/>
    <property type="evidence" value="ECO:0000315"/>
    <property type="project" value="MGI"/>
</dbReference>
<dbReference type="GO" id="GO:0030900">
    <property type="term" value="P:forebrain development"/>
    <property type="evidence" value="ECO:0000316"/>
    <property type="project" value="MGI"/>
</dbReference>
<dbReference type="GO" id="GO:0042474">
    <property type="term" value="P:middle ear morphogenesis"/>
    <property type="evidence" value="ECO:0000315"/>
    <property type="project" value="UniProtKB"/>
</dbReference>
<dbReference type="GO" id="GO:0048644">
    <property type="term" value="P:muscle organ morphogenesis"/>
    <property type="evidence" value="ECO:0000315"/>
    <property type="project" value="MGI"/>
</dbReference>
<dbReference type="GO" id="GO:0000122">
    <property type="term" value="P:negative regulation of transcription by RNA polymerase II"/>
    <property type="evidence" value="ECO:0000314"/>
    <property type="project" value="NTNU_SB"/>
</dbReference>
<dbReference type="GO" id="GO:0030178">
    <property type="term" value="P:negative regulation of Wnt signaling pathway"/>
    <property type="evidence" value="ECO:0000315"/>
    <property type="project" value="MGI"/>
</dbReference>
<dbReference type="GO" id="GO:0014036">
    <property type="term" value="P:neural crest cell fate specification"/>
    <property type="evidence" value="ECO:0000250"/>
    <property type="project" value="UniProtKB"/>
</dbReference>
<dbReference type="GO" id="GO:0023019">
    <property type="term" value="P:signal transduction involved in regulation of gene expression"/>
    <property type="evidence" value="ECO:0000314"/>
    <property type="project" value="MGI"/>
</dbReference>
<dbReference type="GO" id="GO:0016055">
    <property type="term" value="P:Wnt signaling pathway"/>
    <property type="evidence" value="ECO:0000315"/>
    <property type="project" value="MGI"/>
</dbReference>
<dbReference type="CDD" id="cd00086">
    <property type="entry name" value="homeodomain"/>
    <property type="match status" value="1"/>
</dbReference>
<dbReference type="FunFam" id="1.10.10.60:FF:000210">
    <property type="entry name" value="homeobox protein goosecoid"/>
    <property type="match status" value="1"/>
</dbReference>
<dbReference type="Gene3D" id="1.10.10.60">
    <property type="entry name" value="Homeodomain-like"/>
    <property type="match status" value="1"/>
</dbReference>
<dbReference type="InterPro" id="IPR051440">
    <property type="entry name" value="Goosecoid-like_HB"/>
</dbReference>
<dbReference type="InterPro" id="IPR001356">
    <property type="entry name" value="HD"/>
</dbReference>
<dbReference type="InterPro" id="IPR017970">
    <property type="entry name" value="Homeobox_CS"/>
</dbReference>
<dbReference type="InterPro" id="IPR009057">
    <property type="entry name" value="Homeodomain-like_sf"/>
</dbReference>
<dbReference type="PANTHER" id="PTHR46643:SF2">
    <property type="entry name" value="HOMEOBOX PROTEIN GOOSECOID"/>
    <property type="match status" value="1"/>
</dbReference>
<dbReference type="PANTHER" id="PTHR46643">
    <property type="entry name" value="HOMEOBOX PROTEIN GOOSECOID-RELATED"/>
    <property type="match status" value="1"/>
</dbReference>
<dbReference type="Pfam" id="PF00046">
    <property type="entry name" value="Homeodomain"/>
    <property type="match status" value="1"/>
</dbReference>
<dbReference type="SMART" id="SM00389">
    <property type="entry name" value="HOX"/>
    <property type="match status" value="1"/>
</dbReference>
<dbReference type="SUPFAM" id="SSF46689">
    <property type="entry name" value="Homeodomain-like"/>
    <property type="match status" value="1"/>
</dbReference>
<dbReference type="PROSITE" id="PS00027">
    <property type="entry name" value="HOMEOBOX_1"/>
    <property type="match status" value="1"/>
</dbReference>
<dbReference type="PROSITE" id="PS50071">
    <property type="entry name" value="HOMEOBOX_2"/>
    <property type="match status" value="1"/>
</dbReference>
<sequence length="256" mass="27980">MPASMFSIDNILAARPRCKDAVLPVAPSAAAPVVFPALHGDSLYGAGGGTSSDYGAFYPRPVAPGGAGLPAAVGSSRLGYNSYFYGQLHVQAAPVGPACCGAVPPLGAQQCSCVPTPPGYEGPGSVLVSPVPHQMLPYMNVGTLSRTELQLLNQLHCRRKRRHRTIFTDEQLEALENLFQETKYPDVGTREQLARKVHLREEKVEVWFKNRRAKWRRQKRSSSEESENAEKWNKTSSKASPEKREEEGKSDLDSDS</sequence>
<gene>
    <name type="primary">Gsc</name>
</gene>
<comment type="function">
    <text evidence="1 4">Regulates chordin (CHRD). May play a role in spatial programing within discrete embryonic fields or lineage compartments during organogenesis (By similarity). In concert with NKX3-2, plays a role in defining the structural components of the middle ear; required for the development of the entire tympanic ring. Goosecoid-expressing regions of the gastrulating mouse egg cylinder have organizer-like activity when transplanted into Xenopus embryos. Probably involved in the regulatory networks that define neural crest cell fate specification and determine mesoderm cell lineages in mammals (By similarity).</text>
</comment>
<comment type="interaction">
    <interactant intactId="EBI-7457485">
        <id>Q02591</id>
    </interactant>
    <interactant intactId="EBI-7457430">
        <id>O88621</id>
        <label>Foxh1</label>
    </interactant>
    <organismsDiffer>false</organismsDiffer>
    <experiments>2</experiments>
</comment>
<comment type="interaction">
    <interactant intactId="EBI-7457485">
        <id>Q02591</id>
    </interactant>
    <interactant intactId="EBI-301912">
        <id>O09106</id>
        <label>Hdac1</label>
    </interactant>
    <organismsDiffer>false</organismsDiffer>
    <experiments>2</experiments>
</comment>
<comment type="subcellular location">
    <subcellularLocation>
        <location>Nucleus</location>
    </subcellularLocation>
</comment>
<comment type="tissue specificity">
    <text evidence="5">In early gastrulation, expressed in the dorsal lip. In later stages of development found in head, limbs and body wall. In the embryo, expressed in the postotic cranial neural crest cells, the frontonasal prominence, the first branchial arch and cleft, and specific regions of large joints.</text>
</comment>
<comment type="induction">
    <text>By activin.</text>
</comment>
<comment type="similarity">
    <text evidence="6">Belongs to the paired homeobox family. Bicoid subfamily.</text>
</comment>
<protein>
    <recommendedName>
        <fullName>Homeobox protein goosecoid</fullName>
    </recommendedName>
</protein>
<reference key="1">
    <citation type="journal article" date="1992" name="Cell">
        <title>Gastrulation in the mouse: the role of the homeobox gene goosecoid.</title>
        <authorList>
            <person name="Blum M."/>
            <person name="Gaunt S.J."/>
            <person name="Cho K.W.Y."/>
            <person name="Steinbeisser H."/>
            <person name="Blumberg B."/>
            <person name="Bittner D.A."/>
            <person name="De Robertis E.M."/>
        </authorList>
    </citation>
    <scope>NUCLEOTIDE SEQUENCE [GENOMIC DNA]</scope>
</reference>
<reference key="2">
    <citation type="journal article" date="1998" name="J. Biol. Chem.">
        <title>Negative autoregulation of the organizer-specific homeobox gene goosecoid.</title>
        <authorList>
            <person name="Danilov V."/>
            <person name="Blum M."/>
            <person name="Schweickert A."/>
            <person name="Campione M."/>
            <person name="Steinbeisser H."/>
        </authorList>
    </citation>
    <scope>NUCLEOTIDE SEQUENCE [MRNA]</scope>
    <source>
        <strain>C57BL/6J</strain>
    </source>
</reference>
<reference key="3">
    <citation type="journal article" date="2004" name="Development">
        <title>Bapx1 regulates patterning in the middle ear: altered regulatory role in the transition from the proximal jaw during vertebrate evolution.</title>
        <authorList>
            <person name="Tucker A.S."/>
            <person name="Watson R.P."/>
            <person name="Lettice L.A."/>
            <person name="Yamada G."/>
            <person name="Hill R.E."/>
        </authorList>
    </citation>
    <scope>FUNCTION</scope>
</reference>
<reference key="4">
    <citation type="journal article" date="2013" name="Am. J. Hum. Genet.">
        <title>SAMS, a syndrome of short stature, auditory-canal atresia, mandibular hypoplasia, and skeletal abnormalities is a unique neurocristopathy caused by mutations in Goosecoid.</title>
        <authorList>
            <person name="Parry D.A."/>
            <person name="Logan C.V."/>
            <person name="Stegmann A.P."/>
            <person name="Abdelhamed Z.A."/>
            <person name="Calder A."/>
            <person name="Khan S."/>
            <person name="Bonthron D.T."/>
            <person name="Clowes V."/>
            <person name="Sheridan E."/>
            <person name="Ghali N."/>
            <person name="Chudley A.E."/>
            <person name="Dobbie A."/>
            <person name="Stumpel C.T."/>
            <person name="Johnson C.A."/>
        </authorList>
    </citation>
    <scope>TISSUE SPECIFICITY</scope>
</reference>
<proteinExistence type="evidence at protein level"/>
<feature type="chain" id="PRO_0000048886" description="Homeobox protein goosecoid">
    <location>
        <begin position="1"/>
        <end position="256"/>
    </location>
</feature>
<feature type="DNA-binding region" description="Homeobox" evidence="2">
    <location>
        <begin position="160"/>
        <end position="219"/>
    </location>
</feature>
<feature type="region of interest" description="Disordered" evidence="3">
    <location>
        <begin position="213"/>
        <end position="256"/>
    </location>
</feature>
<feature type="compositionally biased region" description="Basic and acidic residues" evidence="3">
    <location>
        <begin position="240"/>
        <end position="256"/>
    </location>
</feature>
<name>GSC_MOUSE</name>
<organism>
    <name type="scientific">Mus musculus</name>
    <name type="common">Mouse</name>
    <dbReference type="NCBI Taxonomy" id="10090"/>
    <lineage>
        <taxon>Eukaryota</taxon>
        <taxon>Metazoa</taxon>
        <taxon>Chordata</taxon>
        <taxon>Craniata</taxon>
        <taxon>Vertebrata</taxon>
        <taxon>Euteleostomi</taxon>
        <taxon>Mammalia</taxon>
        <taxon>Eutheria</taxon>
        <taxon>Euarchontoglires</taxon>
        <taxon>Glires</taxon>
        <taxon>Rodentia</taxon>
        <taxon>Myomorpha</taxon>
        <taxon>Muroidea</taxon>
        <taxon>Muridae</taxon>
        <taxon>Murinae</taxon>
        <taxon>Mus</taxon>
        <taxon>Mus</taxon>
    </lineage>
</organism>
<keyword id="KW-0217">Developmental protein</keyword>
<keyword id="KW-0238">DNA-binding</keyword>
<keyword id="KW-0371">Homeobox</keyword>
<keyword id="KW-0539">Nucleus</keyword>
<keyword id="KW-1185">Reference proteome</keyword>
<accession>Q02591</accession>